<sequence length="60" mass="6770">MAVPARRTSKAKKNKRRTHYKVAAPTVKFDETTGDYSRSHRVSLKGYYKGRKIAKAASAE</sequence>
<keyword id="KW-0687">Ribonucleoprotein</keyword>
<keyword id="KW-0689">Ribosomal protein</keyword>
<gene>
    <name evidence="1" type="primary">rpmF</name>
    <name type="ordered locus">SSU05_0277</name>
</gene>
<accession>A4VT06</accession>
<proteinExistence type="inferred from homology"/>
<comment type="similarity">
    <text evidence="1">Belongs to the bacterial ribosomal protein bL32 family.</text>
</comment>
<reference key="1">
    <citation type="journal article" date="2007" name="PLoS ONE">
        <title>A glimpse of streptococcal toxic shock syndrome from comparative genomics of S. suis 2 Chinese isolates.</title>
        <authorList>
            <person name="Chen C."/>
            <person name="Tang J."/>
            <person name="Dong W."/>
            <person name="Wang C."/>
            <person name="Feng Y."/>
            <person name="Wang J."/>
            <person name="Zheng F."/>
            <person name="Pan X."/>
            <person name="Liu D."/>
            <person name="Li M."/>
            <person name="Song Y."/>
            <person name="Zhu X."/>
            <person name="Sun H."/>
            <person name="Feng T."/>
            <person name="Guo Z."/>
            <person name="Ju A."/>
            <person name="Ge J."/>
            <person name="Dong Y."/>
            <person name="Sun W."/>
            <person name="Jiang Y."/>
            <person name="Wang J."/>
            <person name="Yan J."/>
            <person name="Yang H."/>
            <person name="Wang X."/>
            <person name="Gao G.F."/>
            <person name="Yang R."/>
            <person name="Wang J."/>
            <person name="Yu J."/>
        </authorList>
    </citation>
    <scope>NUCLEOTIDE SEQUENCE [LARGE SCALE GENOMIC DNA]</scope>
    <source>
        <strain>05ZYH33</strain>
    </source>
</reference>
<organism>
    <name type="scientific">Streptococcus suis (strain 05ZYH33)</name>
    <dbReference type="NCBI Taxonomy" id="391295"/>
    <lineage>
        <taxon>Bacteria</taxon>
        <taxon>Bacillati</taxon>
        <taxon>Bacillota</taxon>
        <taxon>Bacilli</taxon>
        <taxon>Lactobacillales</taxon>
        <taxon>Streptococcaceae</taxon>
        <taxon>Streptococcus</taxon>
    </lineage>
</organism>
<protein>
    <recommendedName>
        <fullName evidence="1">Large ribosomal subunit protein bL32</fullName>
    </recommendedName>
    <alternativeName>
        <fullName evidence="2">50S ribosomal protein L32</fullName>
    </alternativeName>
</protein>
<feature type="chain" id="PRO_0000296580" description="Large ribosomal subunit protein bL32">
    <location>
        <begin position="1"/>
        <end position="60"/>
    </location>
</feature>
<evidence type="ECO:0000255" key="1">
    <source>
        <dbReference type="HAMAP-Rule" id="MF_00340"/>
    </source>
</evidence>
<evidence type="ECO:0000305" key="2"/>
<name>RL32_STRSY</name>
<dbReference type="EMBL" id="CP000407">
    <property type="protein sequence ID" value="ABP89245.1"/>
    <property type="molecule type" value="Genomic_DNA"/>
</dbReference>
<dbReference type="SMR" id="A4VT06"/>
<dbReference type="STRING" id="391295.SSU05_0277"/>
<dbReference type="KEGG" id="ssu:SSU05_0277"/>
<dbReference type="eggNOG" id="COG0333">
    <property type="taxonomic scope" value="Bacteria"/>
</dbReference>
<dbReference type="HOGENOM" id="CLU_129084_2_3_9"/>
<dbReference type="GO" id="GO:0015934">
    <property type="term" value="C:large ribosomal subunit"/>
    <property type="evidence" value="ECO:0007669"/>
    <property type="project" value="InterPro"/>
</dbReference>
<dbReference type="GO" id="GO:0003735">
    <property type="term" value="F:structural constituent of ribosome"/>
    <property type="evidence" value="ECO:0007669"/>
    <property type="project" value="InterPro"/>
</dbReference>
<dbReference type="GO" id="GO:0006412">
    <property type="term" value="P:translation"/>
    <property type="evidence" value="ECO:0007669"/>
    <property type="project" value="UniProtKB-UniRule"/>
</dbReference>
<dbReference type="HAMAP" id="MF_00340">
    <property type="entry name" value="Ribosomal_bL32"/>
    <property type="match status" value="1"/>
</dbReference>
<dbReference type="InterPro" id="IPR002677">
    <property type="entry name" value="Ribosomal_bL32"/>
</dbReference>
<dbReference type="InterPro" id="IPR044957">
    <property type="entry name" value="Ribosomal_bL32_bact"/>
</dbReference>
<dbReference type="InterPro" id="IPR011332">
    <property type="entry name" value="Ribosomal_zn-bd"/>
</dbReference>
<dbReference type="NCBIfam" id="TIGR01031">
    <property type="entry name" value="rpmF_bact"/>
    <property type="match status" value="1"/>
</dbReference>
<dbReference type="PANTHER" id="PTHR35534">
    <property type="entry name" value="50S RIBOSOMAL PROTEIN L32"/>
    <property type="match status" value="1"/>
</dbReference>
<dbReference type="PANTHER" id="PTHR35534:SF1">
    <property type="entry name" value="LARGE RIBOSOMAL SUBUNIT PROTEIN BL32"/>
    <property type="match status" value="1"/>
</dbReference>
<dbReference type="Pfam" id="PF01783">
    <property type="entry name" value="Ribosomal_L32p"/>
    <property type="match status" value="1"/>
</dbReference>
<dbReference type="SUPFAM" id="SSF57829">
    <property type="entry name" value="Zn-binding ribosomal proteins"/>
    <property type="match status" value="1"/>
</dbReference>